<gene>
    <name type="primary">ihfA</name>
    <name type="synonym">himA</name>
    <name type="ordered locus">BU131</name>
</gene>
<reference key="1">
    <citation type="journal article" date="2000" name="Nature">
        <title>Genome sequence of the endocellular bacterial symbiont of aphids Buchnera sp. APS.</title>
        <authorList>
            <person name="Shigenobu S."/>
            <person name="Watanabe H."/>
            <person name="Hattori M."/>
            <person name="Sakaki Y."/>
            <person name="Ishikawa H."/>
        </authorList>
    </citation>
    <scope>NUCLEOTIDE SEQUENCE [LARGE SCALE GENOMIC DNA]</scope>
    <source>
        <strain>APS</strain>
    </source>
</reference>
<accession>P57231</accession>
<organism>
    <name type="scientific">Buchnera aphidicola subsp. Acyrthosiphon pisum (strain APS)</name>
    <name type="common">Acyrthosiphon pisum symbiotic bacterium</name>
    <dbReference type="NCBI Taxonomy" id="107806"/>
    <lineage>
        <taxon>Bacteria</taxon>
        <taxon>Pseudomonadati</taxon>
        <taxon>Pseudomonadota</taxon>
        <taxon>Gammaproteobacteria</taxon>
        <taxon>Enterobacterales</taxon>
        <taxon>Erwiniaceae</taxon>
        <taxon>Buchnera</taxon>
    </lineage>
</organism>
<proteinExistence type="inferred from homology"/>
<dbReference type="EMBL" id="BA000003">
    <property type="protein sequence ID" value="BAB12849.1"/>
    <property type="molecule type" value="Genomic_DNA"/>
</dbReference>
<dbReference type="RefSeq" id="NP_239963.1">
    <property type="nucleotide sequence ID" value="NC_002528.1"/>
</dbReference>
<dbReference type="RefSeq" id="WP_009874087.1">
    <property type="nucleotide sequence ID" value="NZ_AP036055.1"/>
</dbReference>
<dbReference type="SMR" id="P57231"/>
<dbReference type="STRING" id="563178.BUAP5A_129"/>
<dbReference type="EnsemblBacteria" id="BAB12849">
    <property type="protein sequence ID" value="BAB12849"/>
    <property type="gene ID" value="BAB12849"/>
</dbReference>
<dbReference type="KEGG" id="buc:BU131"/>
<dbReference type="PATRIC" id="fig|107806.10.peg.140"/>
<dbReference type="eggNOG" id="COG0776">
    <property type="taxonomic scope" value="Bacteria"/>
</dbReference>
<dbReference type="HOGENOM" id="CLU_105066_1_3_6"/>
<dbReference type="Proteomes" id="UP000001806">
    <property type="component" value="Chromosome"/>
</dbReference>
<dbReference type="GO" id="GO:0005829">
    <property type="term" value="C:cytosol"/>
    <property type="evidence" value="ECO:0007669"/>
    <property type="project" value="TreeGrafter"/>
</dbReference>
<dbReference type="GO" id="GO:0003677">
    <property type="term" value="F:DNA binding"/>
    <property type="evidence" value="ECO:0007669"/>
    <property type="project" value="UniProtKB-UniRule"/>
</dbReference>
<dbReference type="GO" id="GO:0030527">
    <property type="term" value="F:structural constituent of chromatin"/>
    <property type="evidence" value="ECO:0007669"/>
    <property type="project" value="InterPro"/>
</dbReference>
<dbReference type="GO" id="GO:0006310">
    <property type="term" value="P:DNA recombination"/>
    <property type="evidence" value="ECO:0007669"/>
    <property type="project" value="UniProtKB-UniRule"/>
</dbReference>
<dbReference type="GO" id="GO:0009893">
    <property type="term" value="P:positive regulation of metabolic process"/>
    <property type="evidence" value="ECO:0007669"/>
    <property type="project" value="UniProtKB-ARBA"/>
</dbReference>
<dbReference type="GO" id="GO:0006355">
    <property type="term" value="P:regulation of DNA-templated transcription"/>
    <property type="evidence" value="ECO:0007669"/>
    <property type="project" value="UniProtKB-UniRule"/>
</dbReference>
<dbReference type="GO" id="GO:0006417">
    <property type="term" value="P:regulation of translation"/>
    <property type="evidence" value="ECO:0007669"/>
    <property type="project" value="UniProtKB-UniRule"/>
</dbReference>
<dbReference type="CDD" id="cd13835">
    <property type="entry name" value="IHF_A"/>
    <property type="match status" value="1"/>
</dbReference>
<dbReference type="Gene3D" id="4.10.520.10">
    <property type="entry name" value="IHF-like DNA-binding proteins"/>
    <property type="match status" value="1"/>
</dbReference>
<dbReference type="HAMAP" id="MF_00380">
    <property type="entry name" value="IHF_alpha"/>
    <property type="match status" value="1"/>
</dbReference>
<dbReference type="InterPro" id="IPR000119">
    <property type="entry name" value="Hist_DNA-bd"/>
</dbReference>
<dbReference type="InterPro" id="IPR020816">
    <property type="entry name" value="Histone-like_DNA-bd_CS"/>
</dbReference>
<dbReference type="InterPro" id="IPR010992">
    <property type="entry name" value="IHF-like_DNA-bd_dom_sf"/>
</dbReference>
<dbReference type="InterPro" id="IPR005684">
    <property type="entry name" value="IHF_alpha"/>
</dbReference>
<dbReference type="NCBIfam" id="TIGR00987">
    <property type="entry name" value="himA"/>
    <property type="match status" value="1"/>
</dbReference>
<dbReference type="NCBIfam" id="NF001401">
    <property type="entry name" value="PRK00285.1"/>
    <property type="match status" value="1"/>
</dbReference>
<dbReference type="PANTHER" id="PTHR33175">
    <property type="entry name" value="DNA-BINDING PROTEIN HU"/>
    <property type="match status" value="1"/>
</dbReference>
<dbReference type="PANTHER" id="PTHR33175:SF2">
    <property type="entry name" value="INTEGRATION HOST FACTOR SUBUNIT ALPHA"/>
    <property type="match status" value="1"/>
</dbReference>
<dbReference type="Pfam" id="PF00216">
    <property type="entry name" value="Bac_DNA_binding"/>
    <property type="match status" value="1"/>
</dbReference>
<dbReference type="PRINTS" id="PR01727">
    <property type="entry name" value="DNABINDINGHU"/>
</dbReference>
<dbReference type="SMART" id="SM00411">
    <property type="entry name" value="BHL"/>
    <property type="match status" value="1"/>
</dbReference>
<dbReference type="SUPFAM" id="SSF47729">
    <property type="entry name" value="IHF-like DNA-binding proteins"/>
    <property type="match status" value="1"/>
</dbReference>
<dbReference type="PROSITE" id="PS00045">
    <property type="entry name" value="HISTONE_LIKE"/>
    <property type="match status" value="1"/>
</dbReference>
<evidence type="ECO:0000250" key="1"/>
<evidence type="ECO:0000305" key="2"/>
<comment type="function">
    <text evidence="1">This protein is one of the two subunits of integration host factor, a specific DNA-binding protein that functions in genetic recombination as well as in transcriptional and translational control.</text>
</comment>
<comment type="subunit">
    <text evidence="1">Heterodimer of an alpha and a beta chain.</text>
</comment>
<comment type="similarity">
    <text evidence="2">Belongs to the bacterial histone-like protein family.</text>
</comment>
<name>IHFA_BUCAI</name>
<protein>
    <recommendedName>
        <fullName>Integration host factor subunit alpha</fullName>
        <shortName>IHF-alpha</shortName>
    </recommendedName>
</protein>
<keyword id="KW-0233">DNA recombination</keyword>
<keyword id="KW-0238">DNA-binding</keyword>
<keyword id="KW-1185">Reference proteome</keyword>
<keyword id="KW-0804">Transcription</keyword>
<keyword id="KW-0805">Transcription regulation</keyword>
<keyword id="KW-0810">Translation regulation</keyword>
<sequence length="102" mass="11840">MVLTKAAISENLFEKLQLTKKESKEFVEFFFEEVRKSLEKGEAVKLSGFGNFQIKKKKARPGRNPRTGEIFLITARRVVTFKAGQKLKNKINNYLIKKNNNF</sequence>
<feature type="chain" id="PRO_0000105003" description="Integration host factor subunit alpha">
    <location>
        <begin position="1"/>
        <end position="102"/>
    </location>
</feature>